<gene>
    <name evidence="2" type="primary">deoD</name>
    <name type="ordered locus">YPDSF_3194</name>
</gene>
<proteinExistence type="inferred from homology"/>
<dbReference type="EC" id="2.4.2.1" evidence="2"/>
<dbReference type="EMBL" id="CP000668">
    <property type="protein sequence ID" value="ABP41552.1"/>
    <property type="molecule type" value="Genomic_DNA"/>
</dbReference>
<dbReference type="RefSeq" id="WP_002209217.1">
    <property type="nucleotide sequence ID" value="NZ_CP009715.1"/>
</dbReference>
<dbReference type="SMR" id="A4TQJ0"/>
<dbReference type="GeneID" id="57974168"/>
<dbReference type="KEGG" id="ypp:YPDSF_3194"/>
<dbReference type="PATRIC" id="fig|386656.14.peg.1153"/>
<dbReference type="GO" id="GO:0005829">
    <property type="term" value="C:cytosol"/>
    <property type="evidence" value="ECO:0007669"/>
    <property type="project" value="TreeGrafter"/>
</dbReference>
<dbReference type="GO" id="GO:0004731">
    <property type="term" value="F:purine-nucleoside phosphorylase activity"/>
    <property type="evidence" value="ECO:0007669"/>
    <property type="project" value="UniProtKB-UniRule"/>
</dbReference>
<dbReference type="GO" id="GO:0006152">
    <property type="term" value="P:purine nucleoside catabolic process"/>
    <property type="evidence" value="ECO:0007669"/>
    <property type="project" value="TreeGrafter"/>
</dbReference>
<dbReference type="CDD" id="cd09006">
    <property type="entry name" value="PNP_EcPNPI-like"/>
    <property type="match status" value="1"/>
</dbReference>
<dbReference type="FunFam" id="3.40.50.1580:FF:000002">
    <property type="entry name" value="Purine nucleoside phosphorylase DeoD-type"/>
    <property type="match status" value="1"/>
</dbReference>
<dbReference type="Gene3D" id="3.40.50.1580">
    <property type="entry name" value="Nucleoside phosphorylase domain"/>
    <property type="match status" value="1"/>
</dbReference>
<dbReference type="HAMAP" id="MF_01627">
    <property type="entry name" value="Pur_nucleosid_phosp"/>
    <property type="match status" value="1"/>
</dbReference>
<dbReference type="InterPro" id="IPR004402">
    <property type="entry name" value="DeoD-type"/>
</dbReference>
<dbReference type="InterPro" id="IPR018016">
    <property type="entry name" value="Nucleoside_phosphorylase_CS"/>
</dbReference>
<dbReference type="InterPro" id="IPR000845">
    <property type="entry name" value="Nucleoside_phosphorylase_d"/>
</dbReference>
<dbReference type="InterPro" id="IPR035994">
    <property type="entry name" value="Nucleoside_phosphorylase_sf"/>
</dbReference>
<dbReference type="NCBIfam" id="TIGR00107">
    <property type="entry name" value="deoD"/>
    <property type="match status" value="1"/>
</dbReference>
<dbReference type="NCBIfam" id="NF004489">
    <property type="entry name" value="PRK05819.1"/>
    <property type="match status" value="1"/>
</dbReference>
<dbReference type="NCBIfam" id="NF009914">
    <property type="entry name" value="PRK13374.1"/>
    <property type="match status" value="1"/>
</dbReference>
<dbReference type="PANTHER" id="PTHR43691:SF2">
    <property type="entry name" value="PURINE NUCLEOSIDE PHOSPHORYLASE DEOD-TYPE"/>
    <property type="match status" value="1"/>
</dbReference>
<dbReference type="PANTHER" id="PTHR43691">
    <property type="entry name" value="URIDINE PHOSPHORYLASE"/>
    <property type="match status" value="1"/>
</dbReference>
<dbReference type="Pfam" id="PF01048">
    <property type="entry name" value="PNP_UDP_1"/>
    <property type="match status" value="1"/>
</dbReference>
<dbReference type="SUPFAM" id="SSF53167">
    <property type="entry name" value="Purine and uridine phosphorylases"/>
    <property type="match status" value="1"/>
</dbReference>
<dbReference type="PROSITE" id="PS01232">
    <property type="entry name" value="PNP_UDP_1"/>
    <property type="match status" value="1"/>
</dbReference>
<name>DEOD_YERPP</name>
<keyword id="KW-0328">Glycosyltransferase</keyword>
<keyword id="KW-0808">Transferase</keyword>
<comment type="function">
    <text evidence="2">Catalyzes the reversible phosphorolytic breakdown of the N-glycosidic bond in the beta-(deoxy)ribonucleoside molecules, with the formation of the corresponding free purine bases and pentose-1-phosphate.</text>
</comment>
<comment type="catalytic activity">
    <reaction evidence="2">
        <text>a purine D-ribonucleoside + phosphate = a purine nucleobase + alpha-D-ribose 1-phosphate</text>
        <dbReference type="Rhea" id="RHEA:19805"/>
        <dbReference type="ChEBI" id="CHEBI:26386"/>
        <dbReference type="ChEBI" id="CHEBI:43474"/>
        <dbReference type="ChEBI" id="CHEBI:57720"/>
        <dbReference type="ChEBI" id="CHEBI:142355"/>
        <dbReference type="EC" id="2.4.2.1"/>
    </reaction>
</comment>
<comment type="catalytic activity">
    <reaction evidence="2">
        <text>a purine 2'-deoxy-D-ribonucleoside + phosphate = a purine nucleobase + 2-deoxy-alpha-D-ribose 1-phosphate</text>
        <dbReference type="Rhea" id="RHEA:36431"/>
        <dbReference type="ChEBI" id="CHEBI:26386"/>
        <dbReference type="ChEBI" id="CHEBI:43474"/>
        <dbReference type="ChEBI" id="CHEBI:57259"/>
        <dbReference type="ChEBI" id="CHEBI:142361"/>
        <dbReference type="EC" id="2.4.2.1"/>
    </reaction>
</comment>
<comment type="subunit">
    <text evidence="2">Homohexamer; trimer of homodimers.</text>
</comment>
<comment type="similarity">
    <text evidence="2">Belongs to the PNP/UDP phosphorylase family.</text>
</comment>
<organism>
    <name type="scientific">Yersinia pestis (strain Pestoides F)</name>
    <dbReference type="NCBI Taxonomy" id="386656"/>
    <lineage>
        <taxon>Bacteria</taxon>
        <taxon>Pseudomonadati</taxon>
        <taxon>Pseudomonadota</taxon>
        <taxon>Gammaproteobacteria</taxon>
        <taxon>Enterobacterales</taxon>
        <taxon>Yersiniaceae</taxon>
        <taxon>Yersinia</taxon>
    </lineage>
</organism>
<reference key="1">
    <citation type="submission" date="2007-02" db="EMBL/GenBank/DDBJ databases">
        <title>Complete sequence of chromosome of Yersinia pestis Pestoides F.</title>
        <authorList>
            <consortium name="US DOE Joint Genome Institute"/>
            <person name="Copeland A."/>
            <person name="Lucas S."/>
            <person name="Lapidus A."/>
            <person name="Barry K."/>
            <person name="Detter J.C."/>
            <person name="Glavina del Rio T."/>
            <person name="Hammon N."/>
            <person name="Israni S."/>
            <person name="Dalin E."/>
            <person name="Tice H."/>
            <person name="Pitluck S."/>
            <person name="Di Bartolo G."/>
            <person name="Chain P."/>
            <person name="Malfatti S."/>
            <person name="Shin M."/>
            <person name="Vergez L."/>
            <person name="Schmutz J."/>
            <person name="Larimer F."/>
            <person name="Land M."/>
            <person name="Hauser L."/>
            <person name="Worsham P."/>
            <person name="Chu M."/>
            <person name="Bearden S."/>
            <person name="Garcia E."/>
            <person name="Richardson P."/>
        </authorList>
    </citation>
    <scope>NUCLEOTIDE SEQUENCE [LARGE SCALE GENOMIC DNA]</scope>
    <source>
        <strain>Pestoides F</strain>
    </source>
</reference>
<sequence>MATPHINAEMGDFADVVLMPGDPLRAKFIAETFLQDVREVNNVRGMLGFTGTYKGRKISVMGHGMGIPSCSIYAKELITDFGVKKIIRVGSCGAVRTDVKLRDVVIGMGACTDSKVNRMRFKDHDYAAIADFEMTRNAVDAAKAKGVNVRVGNLFSADLFYTPDPQMFDVMEKYGILGVEMEAAGICGVAAEFGAKALTICTVSDHIRTGEQTTAAERQTTFNDMIEIALESVLLGDNA</sequence>
<evidence type="ECO:0000250" key="1">
    <source>
        <dbReference type="UniProtKB" id="P50389"/>
    </source>
</evidence>
<evidence type="ECO:0000255" key="2">
    <source>
        <dbReference type="HAMAP-Rule" id="MF_01627"/>
    </source>
</evidence>
<accession>A4TQJ0</accession>
<feature type="chain" id="PRO_1000069653" description="Purine nucleoside phosphorylase DeoD-type">
    <location>
        <begin position="1"/>
        <end position="239"/>
    </location>
</feature>
<feature type="active site" description="Proton donor" evidence="2">
    <location>
        <position position="205"/>
    </location>
</feature>
<feature type="binding site" evidence="1">
    <location>
        <position position="5"/>
    </location>
    <ligand>
        <name>a purine D-ribonucleoside</name>
        <dbReference type="ChEBI" id="CHEBI:142355"/>
        <note>ligand shared between dimeric partners</note>
    </ligand>
</feature>
<feature type="binding site" description="in other chain" evidence="1">
    <location>
        <position position="21"/>
    </location>
    <ligand>
        <name>phosphate</name>
        <dbReference type="ChEBI" id="CHEBI:43474"/>
        <note>ligand shared between dimeric partners</note>
    </ligand>
</feature>
<feature type="binding site" description="in other chain" evidence="1">
    <location>
        <position position="25"/>
    </location>
    <ligand>
        <name>phosphate</name>
        <dbReference type="ChEBI" id="CHEBI:43474"/>
        <note>ligand shared between dimeric partners</note>
    </ligand>
</feature>
<feature type="binding site" evidence="1">
    <location>
        <position position="44"/>
    </location>
    <ligand>
        <name>phosphate</name>
        <dbReference type="ChEBI" id="CHEBI:43474"/>
        <note>ligand shared between dimeric partners</note>
    </ligand>
</feature>
<feature type="binding site" description="in other chain" evidence="1">
    <location>
        <begin position="88"/>
        <end position="91"/>
    </location>
    <ligand>
        <name>phosphate</name>
        <dbReference type="ChEBI" id="CHEBI:43474"/>
        <note>ligand shared between dimeric partners</note>
    </ligand>
</feature>
<feature type="binding site" description="in other chain" evidence="1">
    <location>
        <begin position="180"/>
        <end position="182"/>
    </location>
    <ligand>
        <name>a purine D-ribonucleoside</name>
        <dbReference type="ChEBI" id="CHEBI:142355"/>
        <note>ligand shared between dimeric partners</note>
    </ligand>
</feature>
<feature type="binding site" description="in other chain" evidence="1">
    <location>
        <begin position="204"/>
        <end position="205"/>
    </location>
    <ligand>
        <name>a purine D-ribonucleoside</name>
        <dbReference type="ChEBI" id="CHEBI:142355"/>
        <note>ligand shared between dimeric partners</note>
    </ligand>
</feature>
<feature type="site" description="Important for catalytic activity" evidence="2">
    <location>
        <position position="218"/>
    </location>
</feature>
<protein>
    <recommendedName>
        <fullName evidence="2">Purine nucleoside phosphorylase DeoD-type</fullName>
        <shortName evidence="2">PNP</shortName>
        <ecNumber evidence="2">2.4.2.1</ecNumber>
    </recommendedName>
</protein>